<keyword id="KW-0025">Alternative splicing</keyword>
<keyword id="KW-0868">Chloride</keyword>
<keyword id="KW-0406">Ion transport</keyword>
<keyword id="KW-0472">Membrane</keyword>
<keyword id="KW-0630">Potassium</keyword>
<keyword id="KW-0633">Potassium transport</keyword>
<keyword id="KW-1185">Reference proteome</keyword>
<keyword id="KW-0769">Symport</keyword>
<keyword id="KW-0812">Transmembrane</keyword>
<keyword id="KW-1133">Transmembrane helix</keyword>
<keyword id="KW-0813">Transport</keyword>
<feature type="chain" id="PRO_0000305288" description="Solute carrier family 12 member 8">
    <location>
        <begin position="1"/>
        <end position="705"/>
    </location>
</feature>
<feature type="transmembrane region" description="Helical" evidence="2">
    <location>
        <begin position="38"/>
        <end position="58"/>
    </location>
</feature>
<feature type="transmembrane region" description="Helical" evidence="2">
    <location>
        <begin position="69"/>
        <end position="89"/>
    </location>
</feature>
<feature type="transmembrane region" description="Helical" evidence="2">
    <location>
        <begin position="92"/>
        <end position="112"/>
    </location>
</feature>
<feature type="transmembrane region" description="Helical" evidence="2">
    <location>
        <begin position="121"/>
        <end position="141"/>
    </location>
</feature>
<feature type="transmembrane region" description="Helical" evidence="2">
    <location>
        <begin position="159"/>
        <end position="179"/>
    </location>
</feature>
<feature type="transmembrane region" description="Helical" evidence="2">
    <location>
        <begin position="181"/>
        <end position="201"/>
    </location>
</feature>
<feature type="transmembrane region" description="Helical" evidence="2">
    <location>
        <begin position="232"/>
        <end position="252"/>
    </location>
</feature>
<feature type="transmembrane region" description="Helical" evidence="2">
    <location>
        <begin position="268"/>
        <end position="288"/>
    </location>
</feature>
<feature type="transmembrane region" description="Helical" evidence="2">
    <location>
        <begin position="306"/>
        <end position="326"/>
    </location>
</feature>
<feature type="transmembrane region" description="Helical" evidence="2">
    <location>
        <begin position="368"/>
        <end position="388"/>
    </location>
</feature>
<feature type="transmembrane region" description="Helical" evidence="2">
    <location>
        <begin position="390"/>
        <end position="410"/>
    </location>
</feature>
<feature type="transmembrane region" description="Helical" evidence="2">
    <location>
        <begin position="587"/>
        <end position="607"/>
    </location>
</feature>
<feature type="transmembrane region" description="Helical" evidence="2">
    <location>
        <begin position="612"/>
        <end position="632"/>
    </location>
</feature>
<feature type="region of interest" description="Disordered" evidence="3">
    <location>
        <begin position="472"/>
        <end position="512"/>
    </location>
</feature>
<feature type="compositionally biased region" description="Basic residues" evidence="3">
    <location>
        <begin position="486"/>
        <end position="495"/>
    </location>
</feature>
<feature type="splice variant" id="VSP_028333" description="In isoform 4." evidence="5">
    <location>
        <begin position="1"/>
        <end position="246"/>
    </location>
</feature>
<feature type="splice variant" id="VSP_028334" description="In isoform 3." evidence="4">
    <location>
        <begin position="1"/>
        <end position="31"/>
    </location>
</feature>
<feature type="splice variant" id="VSP_028335" description="In isoform 2." evidence="6">
    <original>MAQRSP</original>
    <variation>MSQV</variation>
    <location>
        <begin position="1"/>
        <end position="6"/>
    </location>
</feature>
<feature type="splice variant" id="VSP_028336" description="In isoform 3 and isoform 4." evidence="4 5">
    <location>
        <begin position="304"/>
        <end position="352"/>
    </location>
</feature>
<feature type="sequence conflict" description="In Ref. 1; AAL37178." evidence="7" ref="1">
    <original>L</original>
    <variation>P</variation>
    <location>
        <position position="183"/>
    </location>
</feature>
<feature type="sequence conflict" description="In Ref. 1; AAL37178." evidence="7" ref="1">
    <original>F</original>
    <variation>L</variation>
    <location>
        <position position="236"/>
    </location>
</feature>
<organism>
    <name type="scientific">Mus musculus</name>
    <name type="common">Mouse</name>
    <dbReference type="NCBI Taxonomy" id="10090"/>
    <lineage>
        <taxon>Eukaryota</taxon>
        <taxon>Metazoa</taxon>
        <taxon>Chordata</taxon>
        <taxon>Craniata</taxon>
        <taxon>Vertebrata</taxon>
        <taxon>Euteleostomi</taxon>
        <taxon>Mammalia</taxon>
        <taxon>Eutheria</taxon>
        <taxon>Euarchontoglires</taxon>
        <taxon>Glires</taxon>
        <taxon>Rodentia</taxon>
        <taxon>Myomorpha</taxon>
        <taxon>Muroidea</taxon>
        <taxon>Muridae</taxon>
        <taxon>Murinae</taxon>
        <taxon>Mus</taxon>
        <taxon>Mus</taxon>
    </lineage>
</organism>
<dbReference type="EMBL" id="AF319951">
    <property type="protein sequence ID" value="AAL37178.1"/>
    <property type="molecule type" value="mRNA"/>
</dbReference>
<dbReference type="EMBL" id="AK165080">
    <property type="protein sequence ID" value="BAE38029.1"/>
    <property type="molecule type" value="mRNA"/>
</dbReference>
<dbReference type="EMBL" id="AC121570">
    <property type="status" value="NOT_ANNOTATED_CDS"/>
    <property type="molecule type" value="Genomic_DNA"/>
</dbReference>
<dbReference type="EMBL" id="AC127412">
    <property type="status" value="NOT_ANNOTATED_CDS"/>
    <property type="molecule type" value="Genomic_DNA"/>
</dbReference>
<dbReference type="EMBL" id="BC030926">
    <property type="protein sequence ID" value="AAH30926.1"/>
    <property type="molecule type" value="mRNA"/>
</dbReference>
<dbReference type="CCDS" id="CCDS37317.1">
    <molecule id="Q8VI23-3"/>
</dbReference>
<dbReference type="CCDS" id="CCDS49834.1">
    <molecule id="Q8VI23-1"/>
</dbReference>
<dbReference type="RefSeq" id="NP_001077371.1">
    <molecule id="Q8VI23-3"/>
    <property type="nucleotide sequence ID" value="NM_001083902.2"/>
</dbReference>
<dbReference type="RefSeq" id="NP_001357928.1">
    <molecule id="Q8VI23-1"/>
    <property type="nucleotide sequence ID" value="NM_001370999.1"/>
</dbReference>
<dbReference type="RefSeq" id="NP_599012.2">
    <molecule id="Q8VI23-1"/>
    <property type="nucleotide sequence ID" value="NM_134251.3"/>
</dbReference>
<dbReference type="RefSeq" id="XP_006521883.1">
    <property type="nucleotide sequence ID" value="XM_006521820.2"/>
</dbReference>
<dbReference type="SMR" id="Q8VI23"/>
<dbReference type="FunCoup" id="Q8VI23">
    <property type="interactions" value="208"/>
</dbReference>
<dbReference type="STRING" id="10090.ENSMUSP00000062337"/>
<dbReference type="iPTMnet" id="Q8VI23"/>
<dbReference type="PhosphoSitePlus" id="Q8VI23"/>
<dbReference type="PaxDb" id="10090-ENSMUSP00000113633"/>
<dbReference type="ProteomicsDB" id="253341">
    <molecule id="Q8VI23-1"/>
</dbReference>
<dbReference type="ProteomicsDB" id="253342">
    <molecule id="Q8VI23-2"/>
</dbReference>
<dbReference type="ProteomicsDB" id="253343">
    <molecule id="Q8VI23-3"/>
</dbReference>
<dbReference type="ProteomicsDB" id="253344">
    <molecule id="Q8VI23-4"/>
</dbReference>
<dbReference type="Antibodypedia" id="33008">
    <property type="antibodies" value="34 antibodies from 16 providers"/>
</dbReference>
<dbReference type="DNASU" id="171286"/>
<dbReference type="Ensembl" id="ENSMUST00000059056.15">
    <molecule id="Q8VI23-1"/>
    <property type="protein sequence ID" value="ENSMUSP00000062337.9"/>
    <property type="gene ID" value="ENSMUSG00000035506.17"/>
</dbReference>
<dbReference type="Ensembl" id="ENSMUST00000119173.8">
    <molecule id="Q8VI23-3"/>
    <property type="protein sequence ID" value="ENSMUSP00000113633.2"/>
    <property type="gene ID" value="ENSMUSG00000035506.17"/>
</dbReference>
<dbReference type="Ensembl" id="ENSMUST00000121925.8">
    <molecule id="Q8VI23-1"/>
    <property type="protein sequence ID" value="ENSMUSP00000112439.2"/>
    <property type="gene ID" value="ENSMUSG00000035506.17"/>
</dbReference>
<dbReference type="GeneID" id="171286"/>
<dbReference type="KEGG" id="mmu:171286"/>
<dbReference type="UCSC" id="uc007zad.1">
    <molecule id="Q8VI23-1"/>
    <property type="organism name" value="mouse"/>
</dbReference>
<dbReference type="UCSC" id="uc007zae.1">
    <molecule id="Q8VI23-3"/>
    <property type="organism name" value="mouse"/>
</dbReference>
<dbReference type="UCSC" id="uc007zag.1">
    <molecule id="Q8VI23-4"/>
    <property type="organism name" value="mouse"/>
</dbReference>
<dbReference type="AGR" id="MGI:2443672"/>
<dbReference type="CTD" id="84561"/>
<dbReference type="MGI" id="MGI:2443672">
    <property type="gene designation" value="Slc12a8"/>
</dbReference>
<dbReference type="VEuPathDB" id="HostDB:ENSMUSG00000035506"/>
<dbReference type="eggNOG" id="KOG2083">
    <property type="taxonomic scope" value="Eukaryota"/>
</dbReference>
<dbReference type="GeneTree" id="ENSGT00940000160130"/>
<dbReference type="HOGENOM" id="CLU_017440_1_1_1"/>
<dbReference type="InParanoid" id="Q8VI23"/>
<dbReference type="OMA" id="IMFIIQW"/>
<dbReference type="OrthoDB" id="2020542at2759"/>
<dbReference type="PhylomeDB" id="Q8VI23"/>
<dbReference type="TreeFam" id="TF313191"/>
<dbReference type="BioGRID-ORCS" id="171286">
    <property type="hits" value="4 hits in 80 CRISPR screens"/>
</dbReference>
<dbReference type="ChiTaRS" id="Slc12a8">
    <property type="organism name" value="mouse"/>
</dbReference>
<dbReference type="PRO" id="PR:Q8VI23"/>
<dbReference type="Proteomes" id="UP000000589">
    <property type="component" value="Chromosome 16"/>
</dbReference>
<dbReference type="RNAct" id="Q8VI23">
    <property type="molecule type" value="protein"/>
</dbReference>
<dbReference type="Bgee" id="ENSMUSG00000035506">
    <property type="expression patterns" value="Expressed in gastrula and 94 other cell types or tissues"/>
</dbReference>
<dbReference type="ExpressionAtlas" id="Q8VI23">
    <property type="expression patterns" value="baseline and differential"/>
</dbReference>
<dbReference type="GO" id="GO:0016020">
    <property type="term" value="C:membrane"/>
    <property type="evidence" value="ECO:0007669"/>
    <property type="project" value="UniProtKB-SubCell"/>
</dbReference>
<dbReference type="GO" id="GO:0015377">
    <property type="term" value="F:chloride:monoatomic cation symporter activity"/>
    <property type="evidence" value="ECO:0007669"/>
    <property type="project" value="InterPro"/>
</dbReference>
<dbReference type="GO" id="GO:0098662">
    <property type="term" value="P:inorganic cation transmembrane transport"/>
    <property type="evidence" value="ECO:0007669"/>
    <property type="project" value="UniProtKB-ARBA"/>
</dbReference>
<dbReference type="GO" id="GO:0006813">
    <property type="term" value="P:potassium ion transport"/>
    <property type="evidence" value="ECO:0007669"/>
    <property type="project" value="UniProtKB-KW"/>
</dbReference>
<dbReference type="FunFam" id="1.20.1740.10:FF:000030">
    <property type="entry name" value="solute carrier family 12 member 8"/>
    <property type="match status" value="1"/>
</dbReference>
<dbReference type="Gene3D" id="1.20.1740.10">
    <property type="entry name" value="Amino acid/polyamine transporter I"/>
    <property type="match status" value="1"/>
</dbReference>
<dbReference type="InterPro" id="IPR004841">
    <property type="entry name" value="AA-permease/SLC12A_dom"/>
</dbReference>
<dbReference type="InterPro" id="IPR004842">
    <property type="entry name" value="SLC12A_fam"/>
</dbReference>
<dbReference type="PANTHER" id="PTHR11827:SF6">
    <property type="entry name" value="SOLUTE CARRIER FAMILY 12 MEMBER 8"/>
    <property type="match status" value="1"/>
</dbReference>
<dbReference type="PANTHER" id="PTHR11827">
    <property type="entry name" value="SOLUTE CARRIER FAMILY 12, CATION COTRANSPORTERS"/>
    <property type="match status" value="1"/>
</dbReference>
<dbReference type="Pfam" id="PF00324">
    <property type="entry name" value="AA_permease"/>
    <property type="match status" value="1"/>
</dbReference>
<reference key="1">
    <citation type="submission" date="2000-11" db="EMBL/GenBank/DDBJ databases">
        <title>Cloning and characterization of mouse CCC9 (SLC12A9), a new member of the cation-chloride cotransporter gene family.</title>
        <authorList>
            <person name="Mount D.B."/>
        </authorList>
    </citation>
    <scope>NUCLEOTIDE SEQUENCE [MRNA] (ISOFORM 2)</scope>
    <source>
        <strain>C57BL/6J</strain>
    </source>
</reference>
<reference key="2">
    <citation type="journal article" date="2005" name="Science">
        <title>The transcriptional landscape of the mammalian genome.</title>
        <authorList>
            <person name="Carninci P."/>
            <person name="Kasukawa T."/>
            <person name="Katayama S."/>
            <person name="Gough J."/>
            <person name="Frith M.C."/>
            <person name="Maeda N."/>
            <person name="Oyama R."/>
            <person name="Ravasi T."/>
            <person name="Lenhard B."/>
            <person name="Wells C."/>
            <person name="Kodzius R."/>
            <person name="Shimokawa K."/>
            <person name="Bajic V.B."/>
            <person name="Brenner S.E."/>
            <person name="Batalov S."/>
            <person name="Forrest A.R."/>
            <person name="Zavolan M."/>
            <person name="Davis M.J."/>
            <person name="Wilming L.G."/>
            <person name="Aidinis V."/>
            <person name="Allen J.E."/>
            <person name="Ambesi-Impiombato A."/>
            <person name="Apweiler R."/>
            <person name="Aturaliya R.N."/>
            <person name="Bailey T.L."/>
            <person name="Bansal M."/>
            <person name="Baxter L."/>
            <person name="Beisel K.W."/>
            <person name="Bersano T."/>
            <person name="Bono H."/>
            <person name="Chalk A.M."/>
            <person name="Chiu K.P."/>
            <person name="Choudhary V."/>
            <person name="Christoffels A."/>
            <person name="Clutterbuck D.R."/>
            <person name="Crowe M.L."/>
            <person name="Dalla E."/>
            <person name="Dalrymple B.P."/>
            <person name="de Bono B."/>
            <person name="Della Gatta G."/>
            <person name="di Bernardo D."/>
            <person name="Down T."/>
            <person name="Engstrom P."/>
            <person name="Fagiolini M."/>
            <person name="Faulkner G."/>
            <person name="Fletcher C.F."/>
            <person name="Fukushima T."/>
            <person name="Furuno M."/>
            <person name="Futaki S."/>
            <person name="Gariboldi M."/>
            <person name="Georgii-Hemming P."/>
            <person name="Gingeras T.R."/>
            <person name="Gojobori T."/>
            <person name="Green R.E."/>
            <person name="Gustincich S."/>
            <person name="Harbers M."/>
            <person name="Hayashi Y."/>
            <person name="Hensch T.K."/>
            <person name="Hirokawa N."/>
            <person name="Hill D."/>
            <person name="Huminiecki L."/>
            <person name="Iacono M."/>
            <person name="Ikeo K."/>
            <person name="Iwama A."/>
            <person name="Ishikawa T."/>
            <person name="Jakt M."/>
            <person name="Kanapin A."/>
            <person name="Katoh M."/>
            <person name="Kawasawa Y."/>
            <person name="Kelso J."/>
            <person name="Kitamura H."/>
            <person name="Kitano H."/>
            <person name="Kollias G."/>
            <person name="Krishnan S.P."/>
            <person name="Kruger A."/>
            <person name="Kummerfeld S.K."/>
            <person name="Kurochkin I.V."/>
            <person name="Lareau L.F."/>
            <person name="Lazarevic D."/>
            <person name="Lipovich L."/>
            <person name="Liu J."/>
            <person name="Liuni S."/>
            <person name="McWilliam S."/>
            <person name="Madan Babu M."/>
            <person name="Madera M."/>
            <person name="Marchionni L."/>
            <person name="Matsuda H."/>
            <person name="Matsuzawa S."/>
            <person name="Miki H."/>
            <person name="Mignone F."/>
            <person name="Miyake S."/>
            <person name="Morris K."/>
            <person name="Mottagui-Tabar S."/>
            <person name="Mulder N."/>
            <person name="Nakano N."/>
            <person name="Nakauchi H."/>
            <person name="Ng P."/>
            <person name="Nilsson R."/>
            <person name="Nishiguchi S."/>
            <person name="Nishikawa S."/>
            <person name="Nori F."/>
            <person name="Ohara O."/>
            <person name="Okazaki Y."/>
            <person name="Orlando V."/>
            <person name="Pang K.C."/>
            <person name="Pavan W.J."/>
            <person name="Pavesi G."/>
            <person name="Pesole G."/>
            <person name="Petrovsky N."/>
            <person name="Piazza S."/>
            <person name="Reed J."/>
            <person name="Reid J.F."/>
            <person name="Ring B.Z."/>
            <person name="Ringwald M."/>
            <person name="Rost B."/>
            <person name="Ruan Y."/>
            <person name="Salzberg S.L."/>
            <person name="Sandelin A."/>
            <person name="Schneider C."/>
            <person name="Schoenbach C."/>
            <person name="Sekiguchi K."/>
            <person name="Semple C.A."/>
            <person name="Seno S."/>
            <person name="Sessa L."/>
            <person name="Sheng Y."/>
            <person name="Shibata Y."/>
            <person name="Shimada H."/>
            <person name="Shimada K."/>
            <person name="Silva D."/>
            <person name="Sinclair B."/>
            <person name="Sperling S."/>
            <person name="Stupka E."/>
            <person name="Sugiura K."/>
            <person name="Sultana R."/>
            <person name="Takenaka Y."/>
            <person name="Taki K."/>
            <person name="Tammoja K."/>
            <person name="Tan S.L."/>
            <person name="Tang S."/>
            <person name="Taylor M.S."/>
            <person name="Tegner J."/>
            <person name="Teichmann S.A."/>
            <person name="Ueda H.R."/>
            <person name="van Nimwegen E."/>
            <person name="Verardo R."/>
            <person name="Wei C.L."/>
            <person name="Yagi K."/>
            <person name="Yamanishi H."/>
            <person name="Zabarovsky E."/>
            <person name="Zhu S."/>
            <person name="Zimmer A."/>
            <person name="Hide W."/>
            <person name="Bult C."/>
            <person name="Grimmond S.M."/>
            <person name="Teasdale R.D."/>
            <person name="Liu E.T."/>
            <person name="Brusic V."/>
            <person name="Quackenbush J."/>
            <person name="Wahlestedt C."/>
            <person name="Mattick J.S."/>
            <person name="Hume D.A."/>
            <person name="Kai C."/>
            <person name="Sasaki D."/>
            <person name="Tomaru Y."/>
            <person name="Fukuda S."/>
            <person name="Kanamori-Katayama M."/>
            <person name="Suzuki M."/>
            <person name="Aoki J."/>
            <person name="Arakawa T."/>
            <person name="Iida J."/>
            <person name="Imamura K."/>
            <person name="Itoh M."/>
            <person name="Kato T."/>
            <person name="Kawaji H."/>
            <person name="Kawagashira N."/>
            <person name="Kawashima T."/>
            <person name="Kojima M."/>
            <person name="Kondo S."/>
            <person name="Konno H."/>
            <person name="Nakano K."/>
            <person name="Ninomiya N."/>
            <person name="Nishio T."/>
            <person name="Okada M."/>
            <person name="Plessy C."/>
            <person name="Shibata K."/>
            <person name="Shiraki T."/>
            <person name="Suzuki S."/>
            <person name="Tagami M."/>
            <person name="Waki K."/>
            <person name="Watahiki A."/>
            <person name="Okamura-Oho Y."/>
            <person name="Suzuki H."/>
            <person name="Kawai J."/>
            <person name="Hayashizaki Y."/>
        </authorList>
    </citation>
    <scope>NUCLEOTIDE SEQUENCE [LARGE SCALE MRNA] (ISOFORM 4)</scope>
    <source>
        <strain>C57BL/6J</strain>
        <tissue>Ovary</tissue>
    </source>
</reference>
<reference key="3">
    <citation type="journal article" date="2009" name="PLoS Biol.">
        <title>Lineage-specific biology revealed by a finished genome assembly of the mouse.</title>
        <authorList>
            <person name="Church D.M."/>
            <person name="Goodstadt L."/>
            <person name="Hillier L.W."/>
            <person name="Zody M.C."/>
            <person name="Goldstein S."/>
            <person name="She X."/>
            <person name="Bult C.J."/>
            <person name="Agarwala R."/>
            <person name="Cherry J.L."/>
            <person name="DiCuccio M."/>
            <person name="Hlavina W."/>
            <person name="Kapustin Y."/>
            <person name="Meric P."/>
            <person name="Maglott D."/>
            <person name="Birtle Z."/>
            <person name="Marques A.C."/>
            <person name="Graves T."/>
            <person name="Zhou S."/>
            <person name="Teague B."/>
            <person name="Potamousis K."/>
            <person name="Churas C."/>
            <person name="Place M."/>
            <person name="Herschleb J."/>
            <person name="Runnheim R."/>
            <person name="Forrest D."/>
            <person name="Amos-Landgraf J."/>
            <person name="Schwartz D.C."/>
            <person name="Cheng Z."/>
            <person name="Lindblad-Toh K."/>
            <person name="Eichler E.E."/>
            <person name="Ponting C.P."/>
        </authorList>
    </citation>
    <scope>NUCLEOTIDE SEQUENCE [LARGE SCALE GENOMIC DNA]</scope>
    <source>
        <strain>C57BL/6J</strain>
    </source>
</reference>
<reference key="4">
    <citation type="journal article" date="2004" name="Genome Res.">
        <title>The status, quality, and expansion of the NIH full-length cDNA project: the Mammalian Gene Collection (MGC).</title>
        <authorList>
            <consortium name="The MGC Project Team"/>
        </authorList>
    </citation>
    <scope>NUCLEOTIDE SEQUENCE [LARGE SCALE MRNA] (ISOFORM 3)</scope>
    <source>
        <strain>FVB/N</strain>
        <tissue>Salivary gland</tissue>
    </source>
</reference>
<gene>
    <name type="primary">Slc12a8</name>
    <name type="synonym">Ccc9</name>
</gene>
<sequence length="705" mass="77020">MAQRSPQELFHEAAQQGILAQPQPWWKIQLFMWEPVLFGTWDGVFTSCMINIFGVVLFLRTGWLVGNTGVLLGLLLVSFVVLVALITVLSGIGVAEHGGISSGGVYSMISSVLGGQMGGTVGLLYVFGQCVAGAMYITGFAESISDLLGLGDIWAVRGISVAVLLALLGINLAGVKWIIRLQLLLLLLLAVSTLDFVVGSFTHLDPEHGFIGYSPELLQSNILPEYSPGESFFTVFGVFFPAATGVMAGFNMGGDLRDPADSVPLGSLAAVGVSWFLYIIFAFLLGAVCTREALRSDFLIAEKVSLVGFLFLLGLYISSLASCMGGLYGAPRILQCIAQDKVIPALAFLANGKGPNKTPVAAICLTSLVTMAFVLVGQVNVLAPVVTINFMLTYIMVDYSYFALSMAHCGLAPSPEPVPRQGPDTLHCSEHLLQDRAPSYGSDVPARSLSEGTLLEFTKDMDQFLQPIEELESRQLGSREGNNPKNQKRKGKKGAKQTLQDSFLLDPGSPLSFPTRTSERLSVAFCGEQESYQKQQTSRSESHDHLVPDLRNQPRVNREDFFLKCRLQEQEIQRRPSVFYACMCNPWVSLLGALASLLIMFVIQWLYTLASMGVAALVYFYIGQASPGLYLGSASNFSFFQWMKSFLVPSCRSLRSAQEQIILAPSPAKVDMAMTQLTQDNADFATRDRYHHSSFLSREQLMPPY</sequence>
<evidence type="ECO:0000250" key="1"/>
<evidence type="ECO:0000255" key="2"/>
<evidence type="ECO:0000256" key="3">
    <source>
        <dbReference type="SAM" id="MobiDB-lite"/>
    </source>
</evidence>
<evidence type="ECO:0000303" key="4">
    <source>
    </source>
</evidence>
<evidence type="ECO:0000303" key="5">
    <source>
    </source>
</evidence>
<evidence type="ECO:0000303" key="6">
    <source ref="1"/>
</evidence>
<evidence type="ECO:0000305" key="7"/>
<protein>
    <recommendedName>
        <fullName>Solute carrier family 12 member 8</fullName>
    </recommendedName>
    <alternativeName>
        <fullName>Cation-chloride cotransporter 9</fullName>
    </alternativeName>
</protein>
<name>S12A8_MOUSE</name>
<accession>Q8VI23</accession>
<accession>Q3TNQ9</accession>
<accession>Q8K0M9</accession>
<comment type="function">
    <text evidence="1">Cation/chloride cotransporter that may play a role in the control of keratinocyte proliferation.</text>
</comment>
<comment type="subcellular location">
    <subcellularLocation>
        <location evidence="7">Membrane</location>
        <topology evidence="7">Multi-pass membrane protein</topology>
    </subcellularLocation>
</comment>
<comment type="alternative products">
    <event type="alternative splicing"/>
    <isoform>
        <id>Q8VI23-1</id>
        <name>1</name>
        <sequence type="displayed"/>
    </isoform>
    <isoform>
        <id>Q8VI23-2</id>
        <name>2</name>
        <sequence type="described" ref="VSP_028335"/>
    </isoform>
    <isoform>
        <id>Q8VI23-3</id>
        <name>3</name>
        <sequence type="described" ref="VSP_028334 VSP_028336"/>
    </isoform>
    <isoform>
        <id>Q8VI23-4</id>
        <name>4</name>
        <sequence type="described" ref="VSP_028333 VSP_028336"/>
    </isoform>
</comment>
<comment type="similarity">
    <text evidence="7">Belongs to the SLC12A transporter family.</text>
</comment>
<proteinExistence type="evidence at transcript level"/>